<reference key="1">
    <citation type="journal article" date="1998" name="Biochem. Mol. Biol. Int.">
        <title>cDNA cloning and sequence analysis of six neurotoxin-like proteins from Chinese continental banded krait.</title>
        <authorList>
            <person name="Qian Y.-C."/>
            <person name="Fan C.-Y."/>
            <person name="Gong Y."/>
            <person name="Yang S.-L."/>
        </authorList>
    </citation>
    <scope>NUCLEOTIDE SEQUENCE [MRNA]</scope>
    <source>
        <tissue>Venom gland</tissue>
    </source>
</reference>
<reference key="2">
    <citation type="submission" date="2010-06" db="EMBL/GenBank/DDBJ databases">
        <authorList>
            <person name="Wang W."/>
            <person name="Jiang Y."/>
            <person name="Li Y."/>
            <person name="Xu X."/>
        </authorList>
    </citation>
    <scope>NUCLEOTIDE SEQUENCE [GENOMIC DNA] OF 57-86</scope>
</reference>
<evidence type="ECO:0000250" key="1"/>
<evidence type="ECO:0000250" key="2">
    <source>
        <dbReference type="UniProtKB" id="P83346"/>
    </source>
</evidence>
<evidence type="ECO:0000305" key="3"/>
<dbReference type="EMBL" id="AJ006137">
    <property type="protein sequence ID" value="CAA06887.1"/>
    <property type="molecule type" value="mRNA"/>
</dbReference>
<dbReference type="EMBL" id="HM597750">
    <property type="protein sequence ID" value="ADN67592.1"/>
    <property type="molecule type" value="Genomic_DNA"/>
</dbReference>
<dbReference type="SMR" id="Q9YGI8"/>
<dbReference type="GO" id="GO:0005576">
    <property type="term" value="C:extracellular region"/>
    <property type="evidence" value="ECO:0007669"/>
    <property type="project" value="UniProtKB-SubCell"/>
</dbReference>
<dbReference type="GO" id="GO:0090729">
    <property type="term" value="F:toxin activity"/>
    <property type="evidence" value="ECO:0007669"/>
    <property type="project" value="UniProtKB-KW"/>
</dbReference>
<dbReference type="CDD" id="cd00206">
    <property type="entry name" value="TFP_snake_toxin"/>
    <property type="match status" value="1"/>
</dbReference>
<dbReference type="FunFam" id="2.10.60.10:FF:000024">
    <property type="entry name" value="Cytotoxin 1"/>
    <property type="match status" value="1"/>
</dbReference>
<dbReference type="Gene3D" id="2.10.60.10">
    <property type="entry name" value="CD59"/>
    <property type="match status" value="1"/>
</dbReference>
<dbReference type="InterPro" id="IPR003571">
    <property type="entry name" value="Snake_3FTx"/>
</dbReference>
<dbReference type="InterPro" id="IPR045860">
    <property type="entry name" value="Snake_toxin-like_sf"/>
</dbReference>
<dbReference type="InterPro" id="IPR018354">
    <property type="entry name" value="Snake_toxin_con_site"/>
</dbReference>
<dbReference type="InterPro" id="IPR054131">
    <property type="entry name" value="Toxin_cobra-type"/>
</dbReference>
<dbReference type="Pfam" id="PF21947">
    <property type="entry name" value="Toxin_cobra-type"/>
    <property type="match status" value="1"/>
</dbReference>
<dbReference type="SUPFAM" id="SSF57302">
    <property type="entry name" value="Snake toxin-like"/>
    <property type="match status" value="1"/>
</dbReference>
<dbReference type="PROSITE" id="PS00272">
    <property type="entry name" value="SNAKE_TOXIN"/>
    <property type="match status" value="1"/>
</dbReference>
<name>3SO3_BUNMU</name>
<organism>
    <name type="scientific">Bungarus multicinctus</name>
    <name type="common">Many-banded krait</name>
    <dbReference type="NCBI Taxonomy" id="8616"/>
    <lineage>
        <taxon>Eukaryota</taxon>
        <taxon>Metazoa</taxon>
        <taxon>Chordata</taxon>
        <taxon>Craniata</taxon>
        <taxon>Vertebrata</taxon>
        <taxon>Euteleostomi</taxon>
        <taxon>Lepidosauria</taxon>
        <taxon>Squamata</taxon>
        <taxon>Bifurcata</taxon>
        <taxon>Unidentata</taxon>
        <taxon>Episquamata</taxon>
        <taxon>Toxicofera</taxon>
        <taxon>Serpentes</taxon>
        <taxon>Colubroidea</taxon>
        <taxon>Elapidae</taxon>
        <taxon>Bungarinae</taxon>
        <taxon>Bungarus</taxon>
    </lineage>
</organism>
<sequence length="86" mass="9519">MKTLLLTLVVVTIICLDLGYTRKCLIKYSQANESSKTCPSGQLLCLKKWEIGNPSGKEVKRGCVATCPKPKKNEIIQCCAKDKCNK</sequence>
<feature type="signal peptide" evidence="1">
    <location>
        <begin position="1"/>
        <end position="21"/>
    </location>
</feature>
<feature type="chain" id="PRO_0000035428" description="Short neurotoxin homolog NTL4">
    <location>
        <begin position="22"/>
        <end position="86"/>
    </location>
</feature>
<feature type="disulfide bond" evidence="2">
    <location>
        <begin position="24"/>
        <end position="45"/>
    </location>
</feature>
<feature type="disulfide bond" evidence="2">
    <location>
        <begin position="38"/>
        <end position="63"/>
    </location>
</feature>
<feature type="disulfide bond" evidence="2">
    <location>
        <begin position="67"/>
        <end position="78"/>
    </location>
</feature>
<feature type="disulfide bond" evidence="2">
    <location>
        <begin position="79"/>
        <end position="84"/>
    </location>
</feature>
<protein>
    <recommendedName>
        <fullName>Short neurotoxin homolog NTL4</fullName>
    </recommendedName>
</protein>
<accession>Q9YGI8</accession>
<accession>E2IU17</accession>
<comment type="subcellular location">
    <subcellularLocation>
        <location evidence="1">Secreted</location>
    </subcellularLocation>
</comment>
<comment type="tissue specificity">
    <text evidence="3">Expressed by the venom gland.</text>
</comment>
<comment type="miscellaneous">
    <text evidence="3">Is classified as a P-type cytotoxin, since a proline residue stands at position 54 (Pro-31 in standard classification).</text>
</comment>
<comment type="similarity">
    <text evidence="3">Belongs to the three-finger toxin family. Short-chain subfamily. Orphan group III sub-subfamily.</text>
</comment>
<proteinExistence type="inferred from homology"/>
<keyword id="KW-1015">Disulfide bond</keyword>
<keyword id="KW-0964">Secreted</keyword>
<keyword id="KW-0732">Signal</keyword>
<keyword id="KW-0800">Toxin</keyword>